<reference key="1">
    <citation type="journal article" date="1988" name="Nucleic Acids Res.">
        <title>Nucleotide sequence of a radish ribulose 1,5 bisphosphate carboxylase small subunit (rbcS) cDNA.</title>
        <authorList>
            <person name="Guidet F."/>
            <person name="Fourcroy P."/>
        </authorList>
    </citation>
    <scope>NUCLEOTIDE SEQUENCE [MRNA]</scope>
</reference>
<name>RBS_RAPSA</name>
<gene>
    <name evidence="1" type="primary">RBCS</name>
</gene>
<proteinExistence type="evidence at transcript level"/>
<feature type="transit peptide" description="Chloroplast" evidence="1">
    <location>
        <begin position="1"/>
        <end position="54"/>
    </location>
</feature>
<feature type="chain" id="PRO_0000031547" description="Ribulose bisphosphate carboxylase small subunit, chloroplastic" evidence="1">
    <location>
        <begin position="55"/>
        <end position="181"/>
    </location>
</feature>
<accession>P08135</accession>
<dbReference type="EMBL" id="X06558">
    <property type="protein sequence ID" value="CAA29801.1"/>
    <property type="molecule type" value="mRNA"/>
</dbReference>
<dbReference type="PIR" id="S00839">
    <property type="entry name" value="RKRVS"/>
</dbReference>
<dbReference type="SMR" id="P08135"/>
<dbReference type="Proteomes" id="UP000504610">
    <property type="component" value="Unplaced"/>
</dbReference>
<dbReference type="GO" id="GO:0009507">
    <property type="term" value="C:chloroplast"/>
    <property type="evidence" value="ECO:0007669"/>
    <property type="project" value="UniProtKB-SubCell"/>
</dbReference>
<dbReference type="GO" id="GO:0016984">
    <property type="term" value="F:ribulose-bisphosphate carboxylase activity"/>
    <property type="evidence" value="ECO:0007669"/>
    <property type="project" value="UniProtKB-UniRule"/>
</dbReference>
<dbReference type="GO" id="GO:0009853">
    <property type="term" value="P:photorespiration"/>
    <property type="evidence" value="ECO:0007669"/>
    <property type="project" value="UniProtKB-KW"/>
</dbReference>
<dbReference type="GO" id="GO:0019253">
    <property type="term" value="P:reductive pentose-phosphate cycle"/>
    <property type="evidence" value="ECO:0007669"/>
    <property type="project" value="UniProtKB-UniRule"/>
</dbReference>
<dbReference type="CDD" id="cd03527">
    <property type="entry name" value="RuBisCO_small"/>
    <property type="match status" value="1"/>
</dbReference>
<dbReference type="FunFam" id="3.30.190.10:FF:000001">
    <property type="entry name" value="Ribulose bisphosphate carboxylase small chain, chloroplastic"/>
    <property type="match status" value="1"/>
</dbReference>
<dbReference type="Gene3D" id="3.30.190.10">
    <property type="entry name" value="Ribulose bisphosphate carboxylase, small subunit"/>
    <property type="match status" value="1"/>
</dbReference>
<dbReference type="HAMAP" id="MF_00859">
    <property type="entry name" value="RuBisCO_S_bact"/>
    <property type="match status" value="1"/>
</dbReference>
<dbReference type="InterPro" id="IPR024681">
    <property type="entry name" value="RuBisCO_ssu"/>
</dbReference>
<dbReference type="InterPro" id="IPR000894">
    <property type="entry name" value="RuBisCO_ssu_dom"/>
</dbReference>
<dbReference type="InterPro" id="IPR024680">
    <property type="entry name" value="RuBisCO_ssu_N"/>
</dbReference>
<dbReference type="InterPro" id="IPR036385">
    <property type="entry name" value="RuBisCO_ssu_sf"/>
</dbReference>
<dbReference type="PANTHER" id="PTHR31262">
    <property type="entry name" value="RIBULOSE BISPHOSPHATE CARBOXYLASE SMALL CHAIN 1, CHLOROPLASTIC"/>
    <property type="match status" value="1"/>
</dbReference>
<dbReference type="PANTHER" id="PTHR31262:SF10">
    <property type="entry name" value="RIBULOSE BISPHOSPHATE CARBOXYLASE SMALL SUBUNIT 1A, CHLOROPLASTIC-RELATED"/>
    <property type="match status" value="1"/>
</dbReference>
<dbReference type="Pfam" id="PF12338">
    <property type="entry name" value="RbcS"/>
    <property type="match status" value="1"/>
</dbReference>
<dbReference type="Pfam" id="PF00101">
    <property type="entry name" value="RuBisCO_small"/>
    <property type="match status" value="1"/>
</dbReference>
<dbReference type="PRINTS" id="PR00152">
    <property type="entry name" value="RUBISCOSMALL"/>
</dbReference>
<dbReference type="SMART" id="SM00961">
    <property type="entry name" value="RuBisCO_small"/>
    <property type="match status" value="1"/>
</dbReference>
<dbReference type="SUPFAM" id="SSF55239">
    <property type="entry name" value="RuBisCO, small subunit"/>
    <property type="match status" value="1"/>
</dbReference>
<protein>
    <recommendedName>
        <fullName evidence="1">Ribulose bisphosphate carboxylase small subunit, chloroplastic</fullName>
        <shortName evidence="1">RuBisCO small subunit</shortName>
    </recommendedName>
</protein>
<keyword id="KW-0113">Calvin cycle</keyword>
<keyword id="KW-0120">Carbon dioxide fixation</keyword>
<keyword id="KW-0150">Chloroplast</keyword>
<keyword id="KW-0601">Photorespiration</keyword>
<keyword id="KW-0602">Photosynthesis</keyword>
<keyword id="KW-0934">Plastid</keyword>
<keyword id="KW-1185">Reference proteome</keyword>
<keyword id="KW-0809">Transit peptide</keyword>
<organism>
    <name type="scientific">Raphanus sativus</name>
    <name type="common">Radish</name>
    <name type="synonym">Raphanus raphanistrum var. sativus</name>
    <dbReference type="NCBI Taxonomy" id="3726"/>
    <lineage>
        <taxon>Eukaryota</taxon>
        <taxon>Viridiplantae</taxon>
        <taxon>Streptophyta</taxon>
        <taxon>Embryophyta</taxon>
        <taxon>Tracheophyta</taxon>
        <taxon>Spermatophyta</taxon>
        <taxon>Magnoliopsida</taxon>
        <taxon>eudicotyledons</taxon>
        <taxon>Gunneridae</taxon>
        <taxon>Pentapetalae</taxon>
        <taxon>rosids</taxon>
        <taxon>malvids</taxon>
        <taxon>Brassicales</taxon>
        <taxon>Brassicaceae</taxon>
        <taxon>Brassiceae</taxon>
        <taxon>Raphanus</taxon>
    </lineage>
</organism>
<comment type="function">
    <text evidence="1">RuBisCO catalyzes two reactions: the carboxylation of D-ribulose 1,5-bisphosphate, the primary event in carbon dioxide fixation, as well as the oxidative fragmentation of the pentose substrate. Both reactions occur simultaneously and in competition at the same active site. Although the small subunit is not catalytic it is essential for maximal activity.</text>
</comment>
<comment type="subunit">
    <text evidence="1">Heterohexadecamer of 8 large and 8 small subunits.</text>
</comment>
<comment type="subcellular location">
    <subcellularLocation>
        <location evidence="1">Plastid</location>
        <location evidence="1">Chloroplast</location>
    </subcellularLocation>
</comment>
<comment type="miscellaneous">
    <text evidence="1">The basic functional RuBisCO is composed of a large chain homodimer in a 'head-to-tail' conformation. In form I RuBisCO this homodimer is arranged in a barrel-like tetramer with the small subunits forming a tetrameric 'cap' on each end of the 'barrel'.</text>
</comment>
<comment type="similarity">
    <text evidence="1">Belongs to the RuBisCO small chain family.</text>
</comment>
<evidence type="ECO:0000255" key="1">
    <source>
        <dbReference type="HAMAP-Rule" id="MF_00860"/>
    </source>
</evidence>
<sequence>MASSMLSSAAVVTSQLQATMVAPFTGLKSSAAFPVTRKTNTDITSIASNGGRVSCMKVWPPIGKKKFETLSYLPDLSDVELAKEVDYLLRNKWIPCVEFELEHGFVYREHGSTPGYYDGRYWTMWKLPLFGCTDSAQVLKEVQECKKEYPNALIRIIGFDNNRQVQCISFIAYKPPSFTDA</sequence>